<evidence type="ECO:0000255" key="1">
    <source>
        <dbReference type="HAMAP-Rule" id="MF_00082"/>
    </source>
</evidence>
<comment type="function">
    <text evidence="1">Catalyzes the ATP-dependent phosphorylation of N-acetyl-L-glutamate.</text>
</comment>
<comment type="catalytic activity">
    <reaction evidence="1">
        <text>N-acetyl-L-glutamate + ATP = N-acetyl-L-glutamyl 5-phosphate + ADP</text>
        <dbReference type="Rhea" id="RHEA:14629"/>
        <dbReference type="ChEBI" id="CHEBI:30616"/>
        <dbReference type="ChEBI" id="CHEBI:44337"/>
        <dbReference type="ChEBI" id="CHEBI:57936"/>
        <dbReference type="ChEBI" id="CHEBI:456216"/>
        <dbReference type="EC" id="2.7.2.8"/>
    </reaction>
</comment>
<comment type="pathway">
    <text evidence="1">Amino-acid biosynthesis; L-arginine biosynthesis; N(2)-acetyl-L-ornithine from L-glutamate: step 2/4.</text>
</comment>
<comment type="subcellular location">
    <subcellularLocation>
        <location evidence="1">Cytoplasm</location>
    </subcellularLocation>
</comment>
<comment type="similarity">
    <text evidence="1">Belongs to the acetylglutamate kinase family. ArgB subfamily.</text>
</comment>
<name>ARGB_CORDI</name>
<keyword id="KW-0028">Amino-acid biosynthesis</keyword>
<keyword id="KW-0055">Arginine biosynthesis</keyword>
<keyword id="KW-0067">ATP-binding</keyword>
<keyword id="KW-0963">Cytoplasm</keyword>
<keyword id="KW-0418">Kinase</keyword>
<keyword id="KW-0547">Nucleotide-binding</keyword>
<keyword id="KW-1185">Reference proteome</keyword>
<keyword id="KW-0808">Transferase</keyword>
<proteinExistence type="inferred from homology"/>
<organism>
    <name type="scientific">Corynebacterium diphtheriae (strain ATCC 700971 / NCTC 13129 / Biotype gravis)</name>
    <dbReference type="NCBI Taxonomy" id="257309"/>
    <lineage>
        <taxon>Bacteria</taxon>
        <taxon>Bacillati</taxon>
        <taxon>Actinomycetota</taxon>
        <taxon>Actinomycetes</taxon>
        <taxon>Mycobacteriales</taxon>
        <taxon>Corynebacteriaceae</taxon>
        <taxon>Corynebacterium</taxon>
    </lineage>
</organism>
<dbReference type="EC" id="2.7.2.8" evidence="1"/>
<dbReference type="EMBL" id="BX248357">
    <property type="protein sequence ID" value="CAE49689.1"/>
    <property type="molecule type" value="Genomic_DNA"/>
</dbReference>
<dbReference type="RefSeq" id="WP_010934857.1">
    <property type="nucleotide sequence ID" value="NC_002935.2"/>
</dbReference>
<dbReference type="SMR" id="Q6NHG8"/>
<dbReference type="STRING" id="257309.DIP1169"/>
<dbReference type="KEGG" id="cdi:DIP1169"/>
<dbReference type="PATRIC" id="fig|257309.4.peg.1151"/>
<dbReference type="HOGENOM" id="CLU_053680_0_1_11"/>
<dbReference type="UniPathway" id="UPA00068">
    <property type="reaction ID" value="UER00107"/>
</dbReference>
<dbReference type="Proteomes" id="UP000002198">
    <property type="component" value="Chromosome"/>
</dbReference>
<dbReference type="GO" id="GO:0005737">
    <property type="term" value="C:cytoplasm"/>
    <property type="evidence" value="ECO:0007669"/>
    <property type="project" value="UniProtKB-SubCell"/>
</dbReference>
<dbReference type="GO" id="GO:0003991">
    <property type="term" value="F:acetylglutamate kinase activity"/>
    <property type="evidence" value="ECO:0007669"/>
    <property type="project" value="UniProtKB-UniRule"/>
</dbReference>
<dbReference type="GO" id="GO:0005524">
    <property type="term" value="F:ATP binding"/>
    <property type="evidence" value="ECO:0007669"/>
    <property type="project" value="UniProtKB-UniRule"/>
</dbReference>
<dbReference type="GO" id="GO:0042450">
    <property type="term" value="P:arginine biosynthetic process via ornithine"/>
    <property type="evidence" value="ECO:0007669"/>
    <property type="project" value="UniProtKB-UniRule"/>
</dbReference>
<dbReference type="GO" id="GO:0006526">
    <property type="term" value="P:L-arginine biosynthetic process"/>
    <property type="evidence" value="ECO:0007669"/>
    <property type="project" value="UniProtKB-UniPathway"/>
</dbReference>
<dbReference type="CDD" id="cd04250">
    <property type="entry name" value="AAK_NAGK-C"/>
    <property type="match status" value="1"/>
</dbReference>
<dbReference type="FunFam" id="3.40.1160.10:FF:000004">
    <property type="entry name" value="Acetylglutamate kinase"/>
    <property type="match status" value="1"/>
</dbReference>
<dbReference type="Gene3D" id="3.40.1160.10">
    <property type="entry name" value="Acetylglutamate kinase-like"/>
    <property type="match status" value="1"/>
</dbReference>
<dbReference type="HAMAP" id="MF_00082">
    <property type="entry name" value="ArgB"/>
    <property type="match status" value="1"/>
</dbReference>
<dbReference type="InterPro" id="IPR036393">
    <property type="entry name" value="AceGlu_kinase-like_sf"/>
</dbReference>
<dbReference type="InterPro" id="IPR004662">
    <property type="entry name" value="AcgluKinase_fam"/>
</dbReference>
<dbReference type="InterPro" id="IPR037528">
    <property type="entry name" value="ArgB"/>
</dbReference>
<dbReference type="InterPro" id="IPR001048">
    <property type="entry name" value="Asp/Glu/Uridylate_kinase"/>
</dbReference>
<dbReference type="InterPro" id="IPR041727">
    <property type="entry name" value="NAGK-C"/>
</dbReference>
<dbReference type="NCBIfam" id="TIGR00761">
    <property type="entry name" value="argB"/>
    <property type="match status" value="1"/>
</dbReference>
<dbReference type="PANTHER" id="PTHR23342">
    <property type="entry name" value="N-ACETYLGLUTAMATE SYNTHASE"/>
    <property type="match status" value="1"/>
</dbReference>
<dbReference type="PANTHER" id="PTHR23342:SF0">
    <property type="entry name" value="N-ACETYLGLUTAMATE SYNTHASE, MITOCHONDRIAL"/>
    <property type="match status" value="1"/>
</dbReference>
<dbReference type="Pfam" id="PF00696">
    <property type="entry name" value="AA_kinase"/>
    <property type="match status" value="1"/>
</dbReference>
<dbReference type="PIRSF" id="PIRSF000728">
    <property type="entry name" value="NAGK"/>
    <property type="match status" value="1"/>
</dbReference>
<dbReference type="SUPFAM" id="SSF53633">
    <property type="entry name" value="Carbamate kinase-like"/>
    <property type="match status" value="1"/>
</dbReference>
<sequence>MTATIDNLTSRERATVLADALPWLQRYRDKIVVVKYGGNAMVDEELKAAFAADMVFLRTVGVRPVVVHGGGPQISQMLQRLGIEGEFKGGFRVTSPEVLEIVRMVLFGQVGRDLVGLINSHGPYAVGTSGEDAGLFRAEKRLVEIDGELTDIGQVGNITAVNASSLMGIIDAGRIPVVSTIAPGDDGSVYNINADTAAGALAAALSAERLLILTNVEGLYTDWPNKDSLVSVIGAERLREKLSALGSGMIPKMESCVDAVIHGVSAAHVIDGRVAHSVLLELLTSGGVGTMVVPDTEMTNGTVYRKDNHV</sequence>
<accession>Q6NHG8</accession>
<protein>
    <recommendedName>
        <fullName evidence="1">Acetylglutamate kinase</fullName>
        <ecNumber evidence="1">2.7.2.8</ecNumber>
    </recommendedName>
    <alternativeName>
        <fullName evidence="1">N-acetyl-L-glutamate 5-phosphotransferase</fullName>
    </alternativeName>
    <alternativeName>
        <fullName evidence="1">NAG kinase</fullName>
        <shortName evidence="1">NAGK</shortName>
    </alternativeName>
</protein>
<feature type="chain" id="PRO_0000112608" description="Acetylglutamate kinase">
    <location>
        <begin position="1"/>
        <end position="310"/>
    </location>
</feature>
<feature type="binding site" evidence="1">
    <location>
        <begin position="70"/>
        <end position="71"/>
    </location>
    <ligand>
        <name>substrate</name>
    </ligand>
</feature>
<feature type="binding site" evidence="1">
    <location>
        <position position="92"/>
    </location>
    <ligand>
        <name>substrate</name>
    </ligand>
</feature>
<feature type="binding site" evidence="1">
    <location>
        <position position="191"/>
    </location>
    <ligand>
        <name>substrate</name>
    </ligand>
</feature>
<feature type="site" description="Transition state stabilizer" evidence="1">
    <location>
        <position position="35"/>
    </location>
</feature>
<feature type="site" description="Transition state stabilizer" evidence="1">
    <location>
        <position position="252"/>
    </location>
</feature>
<gene>
    <name evidence="1" type="primary">argB</name>
    <name type="ordered locus">DIP1169</name>
</gene>
<reference key="1">
    <citation type="journal article" date="2003" name="Nucleic Acids Res.">
        <title>The complete genome sequence and analysis of Corynebacterium diphtheriae NCTC13129.</title>
        <authorList>
            <person name="Cerdeno-Tarraga A.-M."/>
            <person name="Efstratiou A."/>
            <person name="Dover L.G."/>
            <person name="Holden M.T.G."/>
            <person name="Pallen M.J."/>
            <person name="Bentley S.D."/>
            <person name="Besra G.S."/>
            <person name="Churcher C.M."/>
            <person name="James K.D."/>
            <person name="De Zoysa A."/>
            <person name="Chillingworth T."/>
            <person name="Cronin A."/>
            <person name="Dowd L."/>
            <person name="Feltwell T."/>
            <person name="Hamlin N."/>
            <person name="Holroyd S."/>
            <person name="Jagels K."/>
            <person name="Moule S."/>
            <person name="Quail M.A."/>
            <person name="Rabbinowitsch E."/>
            <person name="Rutherford K.M."/>
            <person name="Thomson N.R."/>
            <person name="Unwin L."/>
            <person name="Whitehead S."/>
            <person name="Barrell B.G."/>
            <person name="Parkhill J."/>
        </authorList>
    </citation>
    <scope>NUCLEOTIDE SEQUENCE [LARGE SCALE GENOMIC DNA]</scope>
    <source>
        <strain>ATCC 700971 / NCTC 13129 / Biotype gravis</strain>
    </source>
</reference>